<proteinExistence type="inferred from homology"/>
<reference key="1">
    <citation type="journal article" date="2003" name="Appl. Microbiol. Biotechnol.">
        <title>The Corynebacterium glutamicum genome: features and impacts on biotechnological processes.</title>
        <authorList>
            <person name="Ikeda M."/>
            <person name="Nakagawa S."/>
        </authorList>
    </citation>
    <scope>NUCLEOTIDE SEQUENCE [LARGE SCALE GENOMIC DNA]</scope>
    <source>
        <strain>ATCC 13032 / DSM 20300 / JCM 1318 / BCRC 11384 / CCUG 27702 / LMG 3730 / NBRC 12168 / NCIMB 10025 / NRRL B-2784 / 534</strain>
    </source>
</reference>
<reference key="2">
    <citation type="journal article" date="2003" name="J. Biotechnol.">
        <title>The complete Corynebacterium glutamicum ATCC 13032 genome sequence and its impact on the production of L-aspartate-derived amino acids and vitamins.</title>
        <authorList>
            <person name="Kalinowski J."/>
            <person name="Bathe B."/>
            <person name="Bartels D."/>
            <person name="Bischoff N."/>
            <person name="Bott M."/>
            <person name="Burkovski A."/>
            <person name="Dusch N."/>
            <person name="Eggeling L."/>
            <person name="Eikmanns B.J."/>
            <person name="Gaigalat L."/>
            <person name="Goesmann A."/>
            <person name="Hartmann M."/>
            <person name="Huthmacher K."/>
            <person name="Kraemer R."/>
            <person name="Linke B."/>
            <person name="McHardy A.C."/>
            <person name="Meyer F."/>
            <person name="Moeckel B."/>
            <person name="Pfefferle W."/>
            <person name="Puehler A."/>
            <person name="Rey D.A."/>
            <person name="Rueckert C."/>
            <person name="Rupp O."/>
            <person name="Sahm H."/>
            <person name="Wendisch V.F."/>
            <person name="Wiegraebe I."/>
            <person name="Tauch A."/>
        </authorList>
    </citation>
    <scope>NUCLEOTIDE SEQUENCE [LARGE SCALE GENOMIC DNA]</scope>
    <source>
        <strain>ATCC 13032 / DSM 20300 / JCM 1318 / BCRC 11384 / CCUG 27702 / LMG 3730 / NBRC 12168 / NCIMB 10025 / NRRL B-2784 / 534</strain>
    </source>
</reference>
<sequence length="293" mass="31578">MNEEITLLAAAADPAATENIGWVQTIVLSIVQGLTEFLPISSSGHLRIISELFWGADAGASFTAVVQLGTEAAVLVFFAKEIWQIITGWFAGVFNKERRGFEYRMGWMIIVATIPVVILGVLGKDLIREALRNMWITASVLILFSLVFILAEKMGKKERDYDKLTMKDAIIMGLAQCLALIPGVSRSGGTISAGLFLGLKREVATKFSFLLAIPAVLGSGLYSLPDAFAPSSGQAASGLQLTVGTLVAFVVGYISIAWLMKFVANHSFSWFAAYRIPAGLLVMLLLALGMLNP</sequence>
<feature type="chain" id="PRO_0000151140" description="Undecaprenyl-diphosphatase">
    <location>
        <begin position="1"/>
        <end position="293"/>
    </location>
</feature>
<feature type="transmembrane region" description="Helical" evidence="1">
    <location>
        <begin position="74"/>
        <end position="94"/>
    </location>
</feature>
<feature type="transmembrane region" description="Helical" evidence="1">
    <location>
        <begin position="107"/>
        <end position="127"/>
    </location>
</feature>
<feature type="transmembrane region" description="Helical" evidence="1">
    <location>
        <begin position="134"/>
        <end position="154"/>
    </location>
</feature>
<feature type="transmembrane region" description="Helical" evidence="1">
    <location>
        <begin position="209"/>
        <end position="229"/>
    </location>
</feature>
<feature type="transmembrane region" description="Helical" evidence="1">
    <location>
        <begin position="243"/>
        <end position="263"/>
    </location>
</feature>
<feature type="transmembrane region" description="Helical" evidence="1">
    <location>
        <begin position="271"/>
        <end position="291"/>
    </location>
</feature>
<name>UPPP_CORGL</name>
<keyword id="KW-0046">Antibiotic resistance</keyword>
<keyword id="KW-1003">Cell membrane</keyword>
<keyword id="KW-0133">Cell shape</keyword>
<keyword id="KW-0961">Cell wall biogenesis/degradation</keyword>
<keyword id="KW-0378">Hydrolase</keyword>
<keyword id="KW-0472">Membrane</keyword>
<keyword id="KW-0573">Peptidoglycan synthesis</keyword>
<keyword id="KW-1185">Reference proteome</keyword>
<keyword id="KW-0812">Transmembrane</keyword>
<keyword id="KW-1133">Transmembrane helix</keyword>
<accession>Q8NQC3</accession>
<dbReference type="EC" id="3.6.1.27" evidence="1"/>
<dbReference type="EMBL" id="BA000036">
    <property type="protein sequence ID" value="BAB98908.1"/>
    <property type="molecule type" value="Genomic_DNA"/>
</dbReference>
<dbReference type="EMBL" id="BX927152">
    <property type="protein sequence ID" value="CAF21524.1"/>
    <property type="status" value="ALT_INIT"/>
    <property type="molecule type" value="Genomic_DNA"/>
</dbReference>
<dbReference type="RefSeq" id="NP_600731.1">
    <property type="nucleotide sequence ID" value="NC_003450.3"/>
</dbReference>
<dbReference type="RefSeq" id="WP_003856127.1">
    <property type="nucleotide sequence ID" value="NC_006958.1"/>
</dbReference>
<dbReference type="SMR" id="Q8NQC3"/>
<dbReference type="STRING" id="196627.cg1710"/>
<dbReference type="KEGG" id="cgb:cg1710"/>
<dbReference type="KEGG" id="cgl:Cgl1515"/>
<dbReference type="PATRIC" id="fig|196627.13.peg.1483"/>
<dbReference type="eggNOG" id="COG1968">
    <property type="taxonomic scope" value="Bacteria"/>
</dbReference>
<dbReference type="HOGENOM" id="CLU_060296_1_0_11"/>
<dbReference type="OrthoDB" id="9808289at2"/>
<dbReference type="BioCyc" id="CORYNE:G18NG-11098-MONOMER"/>
<dbReference type="Proteomes" id="UP000000582">
    <property type="component" value="Chromosome"/>
</dbReference>
<dbReference type="Proteomes" id="UP000001009">
    <property type="component" value="Chromosome"/>
</dbReference>
<dbReference type="GO" id="GO:0005886">
    <property type="term" value="C:plasma membrane"/>
    <property type="evidence" value="ECO:0007669"/>
    <property type="project" value="UniProtKB-SubCell"/>
</dbReference>
<dbReference type="GO" id="GO:0050380">
    <property type="term" value="F:undecaprenyl-diphosphatase activity"/>
    <property type="evidence" value="ECO:0007669"/>
    <property type="project" value="UniProtKB-UniRule"/>
</dbReference>
<dbReference type="GO" id="GO:0071555">
    <property type="term" value="P:cell wall organization"/>
    <property type="evidence" value="ECO:0007669"/>
    <property type="project" value="UniProtKB-KW"/>
</dbReference>
<dbReference type="GO" id="GO:0009252">
    <property type="term" value="P:peptidoglycan biosynthetic process"/>
    <property type="evidence" value="ECO:0007669"/>
    <property type="project" value="UniProtKB-KW"/>
</dbReference>
<dbReference type="GO" id="GO:0008360">
    <property type="term" value="P:regulation of cell shape"/>
    <property type="evidence" value="ECO:0007669"/>
    <property type="project" value="UniProtKB-KW"/>
</dbReference>
<dbReference type="GO" id="GO:0046677">
    <property type="term" value="P:response to antibiotic"/>
    <property type="evidence" value="ECO:0007669"/>
    <property type="project" value="UniProtKB-UniRule"/>
</dbReference>
<dbReference type="HAMAP" id="MF_01006">
    <property type="entry name" value="Undec_diphosphatase"/>
    <property type="match status" value="1"/>
</dbReference>
<dbReference type="InterPro" id="IPR003824">
    <property type="entry name" value="UppP"/>
</dbReference>
<dbReference type="NCBIfam" id="NF001392">
    <property type="entry name" value="PRK00281.2-1"/>
    <property type="match status" value="1"/>
</dbReference>
<dbReference type="NCBIfam" id="TIGR00753">
    <property type="entry name" value="undec_PP_bacA"/>
    <property type="match status" value="1"/>
</dbReference>
<dbReference type="PANTHER" id="PTHR30622">
    <property type="entry name" value="UNDECAPRENYL-DIPHOSPHATASE"/>
    <property type="match status" value="1"/>
</dbReference>
<dbReference type="PANTHER" id="PTHR30622:SF4">
    <property type="entry name" value="UNDECAPRENYL-DIPHOSPHATASE"/>
    <property type="match status" value="1"/>
</dbReference>
<dbReference type="Pfam" id="PF02673">
    <property type="entry name" value="BacA"/>
    <property type="match status" value="1"/>
</dbReference>
<protein>
    <recommendedName>
        <fullName evidence="1">Undecaprenyl-diphosphatase</fullName>
        <ecNumber evidence="1">3.6.1.27</ecNumber>
    </recommendedName>
    <alternativeName>
        <fullName evidence="1">Bacitracin resistance protein</fullName>
    </alternativeName>
    <alternativeName>
        <fullName evidence="1">Undecaprenyl pyrophosphate phosphatase</fullName>
    </alternativeName>
</protein>
<gene>
    <name evidence="1" type="primary">uppP</name>
    <name type="synonym">bacA</name>
    <name type="synonym">upk</name>
    <name type="ordered locus">Cgl1515</name>
    <name type="ordered locus">cg1710</name>
</gene>
<evidence type="ECO:0000255" key="1">
    <source>
        <dbReference type="HAMAP-Rule" id="MF_01006"/>
    </source>
</evidence>
<evidence type="ECO:0000305" key="2"/>
<comment type="function">
    <text evidence="1">Catalyzes the dephosphorylation of undecaprenyl diphosphate (UPP). Confers resistance to bacitracin.</text>
</comment>
<comment type="catalytic activity">
    <reaction evidence="1">
        <text>di-trans,octa-cis-undecaprenyl diphosphate + H2O = di-trans,octa-cis-undecaprenyl phosphate + phosphate + H(+)</text>
        <dbReference type="Rhea" id="RHEA:28094"/>
        <dbReference type="ChEBI" id="CHEBI:15377"/>
        <dbReference type="ChEBI" id="CHEBI:15378"/>
        <dbReference type="ChEBI" id="CHEBI:43474"/>
        <dbReference type="ChEBI" id="CHEBI:58405"/>
        <dbReference type="ChEBI" id="CHEBI:60392"/>
        <dbReference type="EC" id="3.6.1.27"/>
    </reaction>
</comment>
<comment type="subcellular location">
    <subcellularLocation>
        <location evidence="1">Cell membrane</location>
        <topology evidence="1">Multi-pass membrane protein</topology>
    </subcellularLocation>
</comment>
<comment type="miscellaneous">
    <text>Bacitracin is thought to be involved in the inhibition of peptidoglycan synthesis by sequestering undecaprenyl diphosphate, thereby reducing the pool of lipid carrier available.</text>
</comment>
<comment type="similarity">
    <text evidence="1">Belongs to the UppP family.</text>
</comment>
<comment type="sequence caution" evidence="2">
    <conflict type="erroneous initiation">
        <sequence resource="EMBL-CDS" id="CAF21524"/>
    </conflict>
</comment>
<organism>
    <name type="scientific">Corynebacterium glutamicum (strain ATCC 13032 / DSM 20300 / JCM 1318 / BCRC 11384 / CCUG 27702 / LMG 3730 / NBRC 12168 / NCIMB 10025 / NRRL B-2784 / 534)</name>
    <dbReference type="NCBI Taxonomy" id="196627"/>
    <lineage>
        <taxon>Bacteria</taxon>
        <taxon>Bacillati</taxon>
        <taxon>Actinomycetota</taxon>
        <taxon>Actinomycetes</taxon>
        <taxon>Mycobacteriales</taxon>
        <taxon>Corynebacteriaceae</taxon>
        <taxon>Corynebacterium</taxon>
    </lineage>
</organism>